<gene>
    <name evidence="1" type="primary">rutA</name>
    <name type="ordered locus">Caul_3982</name>
</gene>
<evidence type="ECO:0000255" key="1">
    <source>
        <dbReference type="HAMAP-Rule" id="MF_01699"/>
    </source>
</evidence>
<protein>
    <recommendedName>
        <fullName evidence="1">Pyrimidine monooxygenase RutA</fullName>
        <ecNumber evidence="1">1.14.99.46</ecNumber>
    </recommendedName>
</protein>
<sequence>MEIGVFIPIGNNGWLISEAAPQYMPSFALNKEIVQKAEKYGFDFALSMIKLRGFGGKTQFWEHNLESFTLMAGLAAVTDRIKIFATAATLTLPPAIVARMASTIDSIAPGRFGINLVTGWQKAEYDQMGLWPGEQHYTDRYNYLAEYATVLRELLETGVSDFKGKYFQMTDCRVSPHPKDTKLICAGSSNEGLAFTAQYADYSFALGKGTNTPTAFGGVNDRLKAAADKTGRDVASYILFMIIADETDEAAMAKWQAYRAGADQEALAWLTNQAAPNAAAGATTNTAQLAAPESAVNLNMGTLVGSYENVARMLDEVAAVEGTAGVLLVFDDFVAGVENFGTKIQPLMTSRAGV</sequence>
<reference key="1">
    <citation type="submission" date="2008-01" db="EMBL/GenBank/DDBJ databases">
        <title>Complete sequence of chromosome of Caulobacter sp. K31.</title>
        <authorList>
            <consortium name="US DOE Joint Genome Institute"/>
            <person name="Copeland A."/>
            <person name="Lucas S."/>
            <person name="Lapidus A."/>
            <person name="Barry K."/>
            <person name="Glavina del Rio T."/>
            <person name="Dalin E."/>
            <person name="Tice H."/>
            <person name="Pitluck S."/>
            <person name="Bruce D."/>
            <person name="Goodwin L."/>
            <person name="Thompson L.S."/>
            <person name="Brettin T."/>
            <person name="Detter J.C."/>
            <person name="Han C."/>
            <person name="Schmutz J."/>
            <person name="Larimer F."/>
            <person name="Land M."/>
            <person name="Hauser L."/>
            <person name="Kyrpides N."/>
            <person name="Kim E."/>
            <person name="Stephens C."/>
            <person name="Richardson P."/>
        </authorList>
    </citation>
    <scope>NUCLEOTIDE SEQUENCE [LARGE SCALE GENOMIC DNA]</scope>
    <source>
        <strain>K31</strain>
    </source>
</reference>
<feature type="chain" id="PRO_0000402588" description="Pyrimidine monooxygenase RutA">
    <location>
        <begin position="1"/>
        <end position="354"/>
    </location>
</feature>
<feature type="binding site" evidence="1">
    <location>
        <begin position="49"/>
        <end position="50"/>
    </location>
    <ligand>
        <name>FMN</name>
        <dbReference type="ChEBI" id="CHEBI:58210"/>
    </ligand>
</feature>
<feature type="binding site" evidence="1">
    <location>
        <position position="115"/>
    </location>
    <ligand>
        <name>FMN</name>
        <dbReference type="ChEBI" id="CHEBI:58210"/>
    </ligand>
</feature>
<feature type="binding site" evidence="1">
    <location>
        <position position="124"/>
    </location>
    <ligand>
        <name>FMN</name>
        <dbReference type="ChEBI" id="CHEBI:58210"/>
    </ligand>
</feature>
<feature type="binding site" evidence="1">
    <location>
        <begin position="140"/>
        <end position="141"/>
    </location>
    <ligand>
        <name>FMN</name>
        <dbReference type="ChEBI" id="CHEBI:58210"/>
    </ligand>
</feature>
<feature type="binding site" evidence="1">
    <location>
        <position position="189"/>
    </location>
    <ligand>
        <name>FMN</name>
        <dbReference type="ChEBI" id="CHEBI:58210"/>
    </ligand>
</feature>
<proteinExistence type="inferred from homology"/>
<dbReference type="EC" id="1.14.99.46" evidence="1"/>
<dbReference type="EMBL" id="CP000927">
    <property type="protein sequence ID" value="ABZ73107.1"/>
    <property type="molecule type" value="Genomic_DNA"/>
</dbReference>
<dbReference type="SMR" id="B0SW63"/>
<dbReference type="STRING" id="366602.Caul_3982"/>
<dbReference type="KEGG" id="cak:Caul_3982"/>
<dbReference type="eggNOG" id="COG2141">
    <property type="taxonomic scope" value="Bacteria"/>
</dbReference>
<dbReference type="HOGENOM" id="CLU_027853_1_1_5"/>
<dbReference type="OrthoDB" id="9814695at2"/>
<dbReference type="GO" id="GO:0008726">
    <property type="term" value="F:alkanesulfonate monooxygenase activity"/>
    <property type="evidence" value="ECO:0007669"/>
    <property type="project" value="TreeGrafter"/>
</dbReference>
<dbReference type="GO" id="GO:0052614">
    <property type="term" value="F:uracil oxygenase activity"/>
    <property type="evidence" value="ECO:0007669"/>
    <property type="project" value="UniProtKB-EC"/>
</dbReference>
<dbReference type="GO" id="GO:0046306">
    <property type="term" value="P:alkanesulfonate catabolic process"/>
    <property type="evidence" value="ECO:0007669"/>
    <property type="project" value="TreeGrafter"/>
</dbReference>
<dbReference type="GO" id="GO:0019740">
    <property type="term" value="P:nitrogen utilization"/>
    <property type="evidence" value="ECO:0007669"/>
    <property type="project" value="UniProtKB-UniRule"/>
</dbReference>
<dbReference type="GO" id="GO:0006212">
    <property type="term" value="P:uracil catabolic process"/>
    <property type="evidence" value="ECO:0007669"/>
    <property type="project" value="UniProtKB-UniRule"/>
</dbReference>
<dbReference type="CDD" id="cd01094">
    <property type="entry name" value="Alkanesulfonate_monoxygenase"/>
    <property type="match status" value="1"/>
</dbReference>
<dbReference type="Gene3D" id="3.20.20.30">
    <property type="entry name" value="Luciferase-like domain"/>
    <property type="match status" value="1"/>
</dbReference>
<dbReference type="HAMAP" id="MF_01699">
    <property type="entry name" value="RutA"/>
    <property type="match status" value="1"/>
</dbReference>
<dbReference type="InterPro" id="IPR011251">
    <property type="entry name" value="Luciferase-like_dom"/>
</dbReference>
<dbReference type="InterPro" id="IPR036661">
    <property type="entry name" value="Luciferase-like_sf"/>
</dbReference>
<dbReference type="InterPro" id="IPR019914">
    <property type="entry name" value="Pyrimidine_monooxygenase_RutA"/>
</dbReference>
<dbReference type="InterPro" id="IPR050172">
    <property type="entry name" value="SsuD_RutA_monooxygenase"/>
</dbReference>
<dbReference type="NCBIfam" id="TIGR03612">
    <property type="entry name" value="RutA"/>
    <property type="match status" value="1"/>
</dbReference>
<dbReference type="PANTHER" id="PTHR42847">
    <property type="entry name" value="ALKANESULFONATE MONOOXYGENASE"/>
    <property type="match status" value="1"/>
</dbReference>
<dbReference type="PANTHER" id="PTHR42847:SF4">
    <property type="entry name" value="ALKANESULFONATE MONOOXYGENASE-RELATED"/>
    <property type="match status" value="1"/>
</dbReference>
<dbReference type="Pfam" id="PF00296">
    <property type="entry name" value="Bac_luciferase"/>
    <property type="match status" value="1"/>
</dbReference>
<dbReference type="SUPFAM" id="SSF51679">
    <property type="entry name" value="Bacterial luciferase-like"/>
    <property type="match status" value="1"/>
</dbReference>
<keyword id="KW-0285">Flavoprotein</keyword>
<keyword id="KW-0288">FMN</keyword>
<keyword id="KW-0503">Monooxygenase</keyword>
<keyword id="KW-0521">NADP</keyword>
<keyword id="KW-0560">Oxidoreductase</keyword>
<accession>B0SW63</accession>
<comment type="function">
    <text evidence="1">Catalyzes the pyrimidine ring opening between N-3 and C-4 by an unusual flavin hydroperoxide-catalyzed mechanism, adding oxygen atoms in the process to yield ureidoacrylate peracid, that immediately reacts with FMN forming ureidoacrylate and FMN-N(5)-oxide. The FMN-N(5)-oxide reacts spontaneously with NADH to produce FMN. Requires the flavin reductase RutF to regenerate FMN in vivo.</text>
</comment>
<comment type="catalytic activity">
    <reaction evidence="1">
        <text>uracil + FMNH2 + NADH + O2 = (Z)-3-ureidoacrylate + FMN + NAD(+) + H2O + H(+)</text>
        <dbReference type="Rhea" id="RHEA:31587"/>
        <dbReference type="ChEBI" id="CHEBI:15377"/>
        <dbReference type="ChEBI" id="CHEBI:15378"/>
        <dbReference type="ChEBI" id="CHEBI:15379"/>
        <dbReference type="ChEBI" id="CHEBI:17568"/>
        <dbReference type="ChEBI" id="CHEBI:57540"/>
        <dbReference type="ChEBI" id="CHEBI:57618"/>
        <dbReference type="ChEBI" id="CHEBI:57945"/>
        <dbReference type="ChEBI" id="CHEBI:58210"/>
        <dbReference type="ChEBI" id="CHEBI:59891"/>
        <dbReference type="EC" id="1.14.99.46"/>
    </reaction>
</comment>
<comment type="catalytic activity">
    <reaction evidence="1">
        <text>thymine + FMNH2 + NADH + O2 = (Z)-2-methylureidoacrylate + FMN + NAD(+) + H2O + H(+)</text>
        <dbReference type="Rhea" id="RHEA:31599"/>
        <dbReference type="ChEBI" id="CHEBI:15377"/>
        <dbReference type="ChEBI" id="CHEBI:15378"/>
        <dbReference type="ChEBI" id="CHEBI:15379"/>
        <dbReference type="ChEBI" id="CHEBI:17821"/>
        <dbReference type="ChEBI" id="CHEBI:57540"/>
        <dbReference type="ChEBI" id="CHEBI:57618"/>
        <dbReference type="ChEBI" id="CHEBI:57945"/>
        <dbReference type="ChEBI" id="CHEBI:58210"/>
        <dbReference type="ChEBI" id="CHEBI:143783"/>
        <dbReference type="EC" id="1.14.99.46"/>
    </reaction>
</comment>
<comment type="similarity">
    <text evidence="1">Belongs to the NtaA/SnaA/DszA monooxygenase family. RutA subfamily.</text>
</comment>
<name>RUTA_CAUSK</name>
<organism>
    <name type="scientific">Caulobacter sp. (strain K31)</name>
    <dbReference type="NCBI Taxonomy" id="366602"/>
    <lineage>
        <taxon>Bacteria</taxon>
        <taxon>Pseudomonadati</taxon>
        <taxon>Pseudomonadota</taxon>
        <taxon>Alphaproteobacteria</taxon>
        <taxon>Caulobacterales</taxon>
        <taxon>Caulobacteraceae</taxon>
        <taxon>Caulobacter</taxon>
    </lineage>
</organism>